<gene>
    <name type="primary">mdt-11</name>
    <name type="ORF">R144.9</name>
</gene>
<organism>
    <name type="scientific">Caenorhabditis elegans</name>
    <dbReference type="NCBI Taxonomy" id="6239"/>
    <lineage>
        <taxon>Eukaryota</taxon>
        <taxon>Metazoa</taxon>
        <taxon>Ecdysozoa</taxon>
        <taxon>Nematoda</taxon>
        <taxon>Chromadorea</taxon>
        <taxon>Rhabditida</taxon>
        <taxon>Rhabditina</taxon>
        <taxon>Rhabditomorpha</taxon>
        <taxon>Rhabditoidea</taxon>
        <taxon>Rhabditidae</taxon>
        <taxon>Peloderinae</taxon>
        <taxon>Caenorhabditis</taxon>
    </lineage>
</organism>
<sequence length="188" mass="20339">MEPNPSDPVLTDRIQAIVTTEKSIDEMMKCAREIIQDLGKEKQIGKNKMEDNANNFKKLITQVENELSAQMQYLSHVCVGSSHQGSTFGVLQNSLLAQSGLSSLHSELFQIVRYLDPTSDEPQTTEEDEEDGSDDLNEDGADGAPSSTVTSSTTDGSGGGDDAASSSAPRSQEESGRQMTDDDDDMEQ</sequence>
<protein>
    <recommendedName>
        <fullName>Mediator of RNA polymerase II transcription subunit 11</fullName>
    </recommendedName>
    <alternativeName>
        <fullName>Mediator complex subunit 11</fullName>
    </alternativeName>
</protein>
<proteinExistence type="inferred from homology"/>
<feature type="chain" id="PRO_0000304316" description="Mediator of RNA polymerase II transcription subunit 11">
    <location>
        <begin position="1"/>
        <end position="188"/>
    </location>
</feature>
<feature type="region of interest" description="Disordered" evidence="4">
    <location>
        <begin position="116"/>
        <end position="188"/>
    </location>
</feature>
<feature type="coiled-coil region" evidence="3">
    <location>
        <begin position="46"/>
        <end position="72"/>
    </location>
</feature>
<feature type="compositionally biased region" description="Acidic residues" evidence="4">
    <location>
        <begin position="123"/>
        <end position="141"/>
    </location>
</feature>
<feature type="compositionally biased region" description="Low complexity" evidence="4">
    <location>
        <begin position="146"/>
        <end position="155"/>
    </location>
</feature>
<feature type="compositionally biased region" description="Basic and acidic residues" evidence="4">
    <location>
        <begin position="171"/>
        <end position="180"/>
    </location>
</feature>
<name>MED11_CAEEL</name>
<evidence type="ECO:0000250" key="1"/>
<evidence type="ECO:0000250" key="2">
    <source>
        <dbReference type="UniProtKB" id="Q99278"/>
    </source>
</evidence>
<evidence type="ECO:0000255" key="3"/>
<evidence type="ECO:0000256" key="4">
    <source>
        <dbReference type="SAM" id="MobiDB-lite"/>
    </source>
</evidence>
<evidence type="ECO:0000305" key="5"/>
<accession>Q9BI74</accession>
<dbReference type="EMBL" id="FO080694">
    <property type="protein sequence ID" value="CCD65876.1"/>
    <property type="molecule type" value="Genomic_DNA"/>
</dbReference>
<dbReference type="RefSeq" id="NP_498066.1">
    <property type="nucleotide sequence ID" value="NM_065665.6"/>
</dbReference>
<dbReference type="SMR" id="Q9BI74"/>
<dbReference type="BioGRID" id="40915">
    <property type="interactions" value="29"/>
</dbReference>
<dbReference type="DIP" id="DIP-24697N"/>
<dbReference type="FunCoup" id="Q9BI74">
    <property type="interactions" value="521"/>
</dbReference>
<dbReference type="IntAct" id="Q9BI74">
    <property type="interactions" value="24"/>
</dbReference>
<dbReference type="STRING" id="6239.R144.9.1"/>
<dbReference type="PaxDb" id="6239-R144.9"/>
<dbReference type="PeptideAtlas" id="Q9BI74"/>
<dbReference type="EnsemblMetazoa" id="R144.9.1">
    <property type="protein sequence ID" value="R144.9.1"/>
    <property type="gene ID" value="WBGene00007015"/>
</dbReference>
<dbReference type="GeneID" id="175682"/>
<dbReference type="KEGG" id="cel:CELE_R144.9"/>
<dbReference type="UCSC" id="R144.9">
    <property type="organism name" value="c. elegans"/>
</dbReference>
<dbReference type="AGR" id="WB:WBGene00007015"/>
<dbReference type="CTD" id="175682"/>
<dbReference type="WormBase" id="R144.9">
    <property type="protein sequence ID" value="CE25092"/>
    <property type="gene ID" value="WBGene00007015"/>
    <property type="gene designation" value="mdt-11"/>
</dbReference>
<dbReference type="eggNOG" id="KOG4057">
    <property type="taxonomic scope" value="Eukaryota"/>
</dbReference>
<dbReference type="GeneTree" id="ENSGT00390000010184"/>
<dbReference type="HOGENOM" id="CLU_1442300_0_0_1"/>
<dbReference type="InParanoid" id="Q9BI74"/>
<dbReference type="OMA" id="QIGKNKM"/>
<dbReference type="OrthoDB" id="5418434at2759"/>
<dbReference type="PhylomeDB" id="Q9BI74"/>
<dbReference type="SignaLink" id="Q9BI74"/>
<dbReference type="PRO" id="PR:Q9BI74"/>
<dbReference type="Proteomes" id="UP000001940">
    <property type="component" value="Chromosome III"/>
</dbReference>
<dbReference type="Bgee" id="WBGene00007015">
    <property type="expression patterns" value="Expressed in embryo and 4 other cell types or tissues"/>
</dbReference>
<dbReference type="GO" id="GO:0016592">
    <property type="term" value="C:mediator complex"/>
    <property type="evidence" value="ECO:0000318"/>
    <property type="project" value="GO_Central"/>
</dbReference>
<dbReference type="GO" id="GO:0003712">
    <property type="term" value="F:transcription coregulator activity"/>
    <property type="evidence" value="ECO:0007669"/>
    <property type="project" value="InterPro"/>
</dbReference>
<dbReference type="GO" id="GO:0006357">
    <property type="term" value="P:regulation of transcription by RNA polymerase II"/>
    <property type="evidence" value="ECO:0007669"/>
    <property type="project" value="InterPro"/>
</dbReference>
<dbReference type="FunFam" id="1.10.287.3490:FF:000005">
    <property type="entry name" value="Mediator of RNA polymerase II transcription subunit 11"/>
    <property type="match status" value="1"/>
</dbReference>
<dbReference type="Gene3D" id="1.10.287.3490">
    <property type="match status" value="1"/>
</dbReference>
<dbReference type="InterPro" id="IPR019404">
    <property type="entry name" value="Mediator_Med11"/>
</dbReference>
<dbReference type="PANTHER" id="PTHR22890">
    <property type="entry name" value="MEDIATOR OF RNA POLYMERASE II TRANSCRIPTION SUBUNIT 11"/>
    <property type="match status" value="1"/>
</dbReference>
<dbReference type="Pfam" id="PF10280">
    <property type="entry name" value="Med11"/>
    <property type="match status" value="1"/>
</dbReference>
<keyword id="KW-0010">Activator</keyword>
<keyword id="KW-0175">Coiled coil</keyword>
<keyword id="KW-0217">Developmental protein</keyword>
<keyword id="KW-0539">Nucleus</keyword>
<keyword id="KW-1185">Reference proteome</keyword>
<keyword id="KW-0804">Transcription</keyword>
<keyword id="KW-0805">Transcription regulation</keyword>
<reference key="1">
    <citation type="journal article" date="1998" name="Science">
        <title>Genome sequence of the nematode C. elegans: a platform for investigating biology.</title>
        <authorList>
            <consortium name="The C. elegans sequencing consortium"/>
        </authorList>
    </citation>
    <scope>NUCLEOTIDE SEQUENCE [LARGE SCALE GENOMIC DNA]</scope>
    <source>
        <strain>Bristol N2</strain>
    </source>
</reference>
<comment type="function">
    <text evidence="2">Component of the Mediator complex, a coactivator involved in the regulated transcription of nearly all RNA polymerase II-dependent genes. Mediator functions as a bridge to convey information from gene-specific regulatory proteins to the basal RNA polymerase II transcription machinery. Mediator is recruited to promoters by direct interactions with regulatory proteins and serves as a scaffold for the assembly of a functional pre-initiation complex with RNA polymerase II and the general transcription factors (By similarity).</text>
</comment>
<comment type="subunit">
    <text evidence="1">Component of the Mediator complex.</text>
</comment>
<comment type="subcellular location">
    <subcellularLocation>
        <location evidence="5">Nucleus</location>
    </subcellularLocation>
</comment>
<comment type="similarity">
    <text evidence="5">Belongs to the Mediator complex subunit 11 family.</text>
</comment>